<reference key="1">
    <citation type="journal article" date="2005" name="Proc. Natl. Acad. Sci. U.S.A.">
        <title>Comparison of the complete genome sequences of Pseudomonas syringae pv. syringae B728a and pv. tomato DC3000.</title>
        <authorList>
            <person name="Feil H."/>
            <person name="Feil W.S."/>
            <person name="Chain P."/>
            <person name="Larimer F."/>
            <person name="Dibartolo G."/>
            <person name="Copeland A."/>
            <person name="Lykidis A."/>
            <person name="Trong S."/>
            <person name="Nolan M."/>
            <person name="Goltsman E."/>
            <person name="Thiel J."/>
            <person name="Malfatti S."/>
            <person name="Loper J.E."/>
            <person name="Lapidus A."/>
            <person name="Detter J.C."/>
            <person name="Land M."/>
            <person name="Richardson P.M."/>
            <person name="Kyrpides N.C."/>
            <person name="Ivanova N."/>
            <person name="Lindow S.E."/>
        </authorList>
    </citation>
    <scope>NUCLEOTIDE SEQUENCE [LARGE SCALE GENOMIC DNA]</scope>
    <source>
        <strain>B728a</strain>
    </source>
</reference>
<sequence length="319" mass="36159">MIDLAPLVRRLAGTPLADWANGLQAQLDTKMAKGHGDLQRWQSALDALPDLQPERIDLIDSFTLEAECNGETRTVLRKALLGLSPWRKGPFNVFGVHIDTEWRSDWKWSRVSPHLDLKGKRVLDVGCGNGYYQWRMLGAGADSVIGVDPNWLFFCQFQAMQRYLPDLPAWHLPFALEDLPANLEGFDTVFSMGVLYHRKSPIDHLLALKDCLVKGGELVMETLVVPGDVHQVLVPEDRYAQMRNVWFLPSVPALELWMRRAGFTDVRCVDVSHTTVDEQRSTEWMRFQSLSDYLDPTDHSKTVEGLPAPMRAVIVGRKP</sequence>
<organism>
    <name type="scientific">Pseudomonas syringae pv. syringae (strain B728a)</name>
    <dbReference type="NCBI Taxonomy" id="205918"/>
    <lineage>
        <taxon>Bacteria</taxon>
        <taxon>Pseudomonadati</taxon>
        <taxon>Pseudomonadota</taxon>
        <taxon>Gammaproteobacteria</taxon>
        <taxon>Pseudomonadales</taxon>
        <taxon>Pseudomonadaceae</taxon>
        <taxon>Pseudomonas</taxon>
        <taxon>Pseudomonas syringae</taxon>
    </lineage>
</organism>
<protein>
    <recommendedName>
        <fullName evidence="1">tRNA U34 carboxymethyltransferase</fullName>
        <ecNumber evidence="1">2.5.1.-</ecNumber>
    </recommendedName>
</protein>
<evidence type="ECO:0000255" key="1">
    <source>
        <dbReference type="HAMAP-Rule" id="MF_01590"/>
    </source>
</evidence>
<gene>
    <name evidence="1" type="primary">cmoB</name>
    <name type="ordered locus">Psyr_3947</name>
</gene>
<comment type="function">
    <text evidence="1">Catalyzes carboxymethyl transfer from carboxy-S-adenosyl-L-methionine (Cx-SAM) to 5-hydroxyuridine (ho5U) to form 5-carboxymethoxyuridine (cmo5U) at position 34 in tRNAs.</text>
</comment>
<comment type="catalytic activity">
    <reaction evidence="1">
        <text>carboxy-S-adenosyl-L-methionine + 5-hydroxyuridine(34) in tRNA = 5-carboxymethoxyuridine(34) in tRNA + S-adenosyl-L-homocysteine + H(+)</text>
        <dbReference type="Rhea" id="RHEA:52848"/>
        <dbReference type="Rhea" id="RHEA-COMP:13381"/>
        <dbReference type="Rhea" id="RHEA-COMP:13383"/>
        <dbReference type="ChEBI" id="CHEBI:15378"/>
        <dbReference type="ChEBI" id="CHEBI:57856"/>
        <dbReference type="ChEBI" id="CHEBI:134278"/>
        <dbReference type="ChEBI" id="CHEBI:136877"/>
        <dbReference type="ChEBI" id="CHEBI:136879"/>
    </reaction>
</comment>
<comment type="subunit">
    <text evidence="1">Homotetramer.</text>
</comment>
<comment type="similarity">
    <text evidence="1">Belongs to the class I-like SAM-binding methyltransferase superfamily. CmoB family.</text>
</comment>
<proteinExistence type="inferred from homology"/>
<feature type="chain" id="PRO_0000313952" description="tRNA U34 carboxymethyltransferase">
    <location>
        <begin position="1"/>
        <end position="319"/>
    </location>
</feature>
<feature type="binding site" evidence="1">
    <location>
        <position position="88"/>
    </location>
    <ligand>
        <name>carboxy-S-adenosyl-L-methionine</name>
        <dbReference type="ChEBI" id="CHEBI:134278"/>
    </ligand>
</feature>
<feature type="binding site" evidence="1">
    <location>
        <position position="102"/>
    </location>
    <ligand>
        <name>carboxy-S-adenosyl-L-methionine</name>
        <dbReference type="ChEBI" id="CHEBI:134278"/>
    </ligand>
</feature>
<feature type="binding site" evidence="1">
    <location>
        <position position="107"/>
    </location>
    <ligand>
        <name>carboxy-S-adenosyl-L-methionine</name>
        <dbReference type="ChEBI" id="CHEBI:134278"/>
    </ligand>
</feature>
<feature type="binding site" evidence="1">
    <location>
        <position position="126"/>
    </location>
    <ligand>
        <name>carboxy-S-adenosyl-L-methionine</name>
        <dbReference type="ChEBI" id="CHEBI:134278"/>
    </ligand>
</feature>
<feature type="binding site" evidence="1">
    <location>
        <begin position="176"/>
        <end position="177"/>
    </location>
    <ligand>
        <name>carboxy-S-adenosyl-L-methionine</name>
        <dbReference type="ChEBI" id="CHEBI:134278"/>
    </ligand>
</feature>
<feature type="binding site" evidence="1">
    <location>
        <position position="192"/>
    </location>
    <ligand>
        <name>carboxy-S-adenosyl-L-methionine</name>
        <dbReference type="ChEBI" id="CHEBI:134278"/>
    </ligand>
</feature>
<feature type="binding site" evidence="1">
    <location>
        <position position="196"/>
    </location>
    <ligand>
        <name>carboxy-S-adenosyl-L-methionine</name>
        <dbReference type="ChEBI" id="CHEBI:134278"/>
    </ligand>
</feature>
<feature type="binding site" evidence="1">
    <location>
        <position position="311"/>
    </location>
    <ligand>
        <name>carboxy-S-adenosyl-L-methionine</name>
        <dbReference type="ChEBI" id="CHEBI:134278"/>
    </ligand>
</feature>
<accession>Q4ZPE5</accession>
<name>CMOB_PSEU2</name>
<dbReference type="EC" id="2.5.1.-" evidence="1"/>
<dbReference type="EMBL" id="CP000075">
    <property type="protein sequence ID" value="AAY38977.1"/>
    <property type="molecule type" value="Genomic_DNA"/>
</dbReference>
<dbReference type="RefSeq" id="WP_003405349.1">
    <property type="nucleotide sequence ID" value="NC_007005.1"/>
</dbReference>
<dbReference type="RefSeq" id="YP_237015.1">
    <property type="nucleotide sequence ID" value="NC_007005.1"/>
</dbReference>
<dbReference type="SMR" id="Q4ZPE5"/>
<dbReference type="STRING" id="205918.Psyr_3947"/>
<dbReference type="KEGG" id="psb:Psyr_3947"/>
<dbReference type="PATRIC" id="fig|205918.7.peg.4064"/>
<dbReference type="eggNOG" id="COG0500">
    <property type="taxonomic scope" value="Bacteria"/>
</dbReference>
<dbReference type="HOGENOM" id="CLU_052665_0_0_6"/>
<dbReference type="OrthoDB" id="9773188at2"/>
<dbReference type="Proteomes" id="UP000000426">
    <property type="component" value="Chromosome"/>
</dbReference>
<dbReference type="GO" id="GO:0008168">
    <property type="term" value="F:methyltransferase activity"/>
    <property type="evidence" value="ECO:0007669"/>
    <property type="project" value="TreeGrafter"/>
</dbReference>
<dbReference type="GO" id="GO:0016765">
    <property type="term" value="F:transferase activity, transferring alkyl or aryl (other than methyl) groups"/>
    <property type="evidence" value="ECO:0007669"/>
    <property type="project" value="UniProtKB-UniRule"/>
</dbReference>
<dbReference type="GO" id="GO:0002098">
    <property type="term" value="P:tRNA wobble uridine modification"/>
    <property type="evidence" value="ECO:0007669"/>
    <property type="project" value="InterPro"/>
</dbReference>
<dbReference type="CDD" id="cd02440">
    <property type="entry name" value="AdoMet_MTases"/>
    <property type="match status" value="1"/>
</dbReference>
<dbReference type="Gene3D" id="3.40.50.150">
    <property type="entry name" value="Vaccinia Virus protein VP39"/>
    <property type="match status" value="1"/>
</dbReference>
<dbReference type="HAMAP" id="MF_01590">
    <property type="entry name" value="tRNA_carboxymethyltr_CmoB"/>
    <property type="match status" value="1"/>
</dbReference>
<dbReference type="InterPro" id="IPR010017">
    <property type="entry name" value="CmoB"/>
</dbReference>
<dbReference type="InterPro" id="IPR027555">
    <property type="entry name" value="Mo5U34_MeTrfas-like"/>
</dbReference>
<dbReference type="InterPro" id="IPR029063">
    <property type="entry name" value="SAM-dependent_MTases_sf"/>
</dbReference>
<dbReference type="NCBIfam" id="NF011650">
    <property type="entry name" value="PRK15068.1"/>
    <property type="match status" value="1"/>
</dbReference>
<dbReference type="NCBIfam" id="TIGR00452">
    <property type="entry name" value="tRNA 5-methoxyuridine(34)/uridine 5-oxyacetic acid(34) synthase CmoB"/>
    <property type="match status" value="1"/>
</dbReference>
<dbReference type="PANTHER" id="PTHR43464">
    <property type="entry name" value="METHYLTRANSFERASE"/>
    <property type="match status" value="1"/>
</dbReference>
<dbReference type="PANTHER" id="PTHR43464:SF95">
    <property type="entry name" value="TRNA U34 CARBOXYMETHYLTRANSFERASE"/>
    <property type="match status" value="1"/>
</dbReference>
<dbReference type="Pfam" id="PF08003">
    <property type="entry name" value="Methyltransf_9"/>
    <property type="match status" value="1"/>
</dbReference>
<dbReference type="SUPFAM" id="SSF53335">
    <property type="entry name" value="S-adenosyl-L-methionine-dependent methyltransferases"/>
    <property type="match status" value="1"/>
</dbReference>
<keyword id="KW-0808">Transferase</keyword>
<keyword id="KW-0819">tRNA processing</keyword>